<comment type="function">
    <text evidence="1">Core subunit of the mitochondrial membrane respiratory chain NADH dehydrogenase (Complex I) which catalyzes electron transfer from NADH through the respiratory chain, using ubiquinone as an electron acceptor. Essential for the catalytic activity of complex I.</text>
</comment>
<comment type="catalytic activity">
    <reaction evidence="1">
        <text>a ubiquinone + NADH + 5 H(+)(in) = a ubiquinol + NAD(+) + 4 H(+)(out)</text>
        <dbReference type="Rhea" id="RHEA:29091"/>
        <dbReference type="Rhea" id="RHEA-COMP:9565"/>
        <dbReference type="Rhea" id="RHEA-COMP:9566"/>
        <dbReference type="ChEBI" id="CHEBI:15378"/>
        <dbReference type="ChEBI" id="CHEBI:16389"/>
        <dbReference type="ChEBI" id="CHEBI:17976"/>
        <dbReference type="ChEBI" id="CHEBI:57540"/>
        <dbReference type="ChEBI" id="CHEBI:57945"/>
        <dbReference type="EC" id="7.1.1.2"/>
    </reaction>
</comment>
<comment type="subunit">
    <text evidence="1">Core subunit of respiratory chain NADH dehydrogenase (Complex I) which is composed of 45 different subunits. Interacts with TMEM186. Interacts with TMEM242 (By similarity).</text>
</comment>
<comment type="subcellular location">
    <subcellularLocation>
        <location evidence="2">Mitochondrion inner membrane</location>
        <topology evidence="3">Multi-pass membrane protein</topology>
    </subcellularLocation>
</comment>
<comment type="similarity">
    <text evidence="4">Belongs to the complex I subunit 3 family.</text>
</comment>
<sequence>MNLLLTLLTNTTLALLLVFIAFWLPQLNVYAEKTSPYECGFDPMGSARLPFSMKFFLVAITFLLFDLEIALLLPLPWAIQSNNLNTMLTMALFLISLLAASLAYEWTQEGLEWAE</sequence>
<geneLocation type="mitochondrion"/>
<feature type="chain" id="PRO_0000117713" description="NADH-ubiquinone oxidoreductase chain 3">
    <location>
        <begin position="1"/>
        <end position="115"/>
    </location>
</feature>
<feature type="transmembrane region" description="Helical" evidence="3">
    <location>
        <begin position="3"/>
        <end position="23"/>
    </location>
</feature>
<feature type="transmembrane region" description="Helical" evidence="3">
    <location>
        <begin position="55"/>
        <end position="75"/>
    </location>
</feature>
<feature type="transmembrane region" description="Helical" evidence="3">
    <location>
        <begin position="84"/>
        <end position="104"/>
    </location>
</feature>
<dbReference type="EC" id="7.1.1.2" evidence="1"/>
<dbReference type="EMBL" id="X72204">
    <property type="protein sequence ID" value="CAA51002.1"/>
    <property type="molecule type" value="Genomic_DNA"/>
</dbReference>
<dbReference type="PIR" id="S41827">
    <property type="entry name" value="S41827"/>
</dbReference>
<dbReference type="RefSeq" id="NP_007063.1">
    <property type="nucleotide sequence ID" value="NC_001601.1"/>
</dbReference>
<dbReference type="SMR" id="P68307"/>
<dbReference type="GeneID" id="807741"/>
<dbReference type="KEGG" id="bmus:807741"/>
<dbReference type="CTD" id="4537"/>
<dbReference type="OrthoDB" id="154075at2759"/>
<dbReference type="Proteomes" id="UP000694857">
    <property type="component" value="Mitochondrion MT"/>
</dbReference>
<dbReference type="GO" id="GO:0005743">
    <property type="term" value="C:mitochondrial inner membrane"/>
    <property type="evidence" value="ECO:0000250"/>
    <property type="project" value="UniProtKB"/>
</dbReference>
<dbReference type="GO" id="GO:0030964">
    <property type="term" value="C:NADH dehydrogenase complex"/>
    <property type="evidence" value="ECO:0007669"/>
    <property type="project" value="TreeGrafter"/>
</dbReference>
<dbReference type="GO" id="GO:0008137">
    <property type="term" value="F:NADH dehydrogenase (ubiquinone) activity"/>
    <property type="evidence" value="ECO:0000250"/>
    <property type="project" value="UniProtKB"/>
</dbReference>
<dbReference type="GO" id="GO:0006120">
    <property type="term" value="P:mitochondrial electron transport, NADH to ubiquinone"/>
    <property type="evidence" value="ECO:0000250"/>
    <property type="project" value="UniProtKB"/>
</dbReference>
<dbReference type="FunFam" id="1.20.58.1610:FF:000004">
    <property type="entry name" value="NADH-quinone oxidoreductase subunit A"/>
    <property type="match status" value="1"/>
</dbReference>
<dbReference type="Gene3D" id="1.20.58.1610">
    <property type="entry name" value="NADH:ubiquinone/plastoquinone oxidoreductase, chain 3"/>
    <property type="match status" value="1"/>
</dbReference>
<dbReference type="InterPro" id="IPR000440">
    <property type="entry name" value="NADH_UbQ/plastoQ_OxRdtase_su3"/>
</dbReference>
<dbReference type="InterPro" id="IPR038430">
    <property type="entry name" value="NDAH_ubi_oxred_su3_sf"/>
</dbReference>
<dbReference type="PANTHER" id="PTHR11058">
    <property type="entry name" value="NADH-UBIQUINONE OXIDOREDUCTASE CHAIN 3"/>
    <property type="match status" value="1"/>
</dbReference>
<dbReference type="PANTHER" id="PTHR11058:SF9">
    <property type="entry name" value="NADH-UBIQUINONE OXIDOREDUCTASE CHAIN 3"/>
    <property type="match status" value="1"/>
</dbReference>
<dbReference type="Pfam" id="PF00507">
    <property type="entry name" value="Oxidored_q4"/>
    <property type="match status" value="1"/>
</dbReference>
<reference key="1">
    <citation type="journal article" date="1993" name="J. Mol. Evol.">
        <title>Comparison between the complete mtDNA sequences of the blue and the fin whale, two species that can hybridize in nature.</title>
        <authorList>
            <person name="Arnason U."/>
            <person name="Gullberg A."/>
        </authorList>
    </citation>
    <scope>NUCLEOTIDE SEQUENCE [GENOMIC DNA]</scope>
</reference>
<gene>
    <name evidence="1" type="primary">MT-ND3</name>
    <name type="synonym">MTND3</name>
    <name type="synonym">NADH3</name>
    <name type="synonym">ND3</name>
</gene>
<organism>
    <name type="scientific">Balaenoptera musculus</name>
    <name type="common">Blue whale</name>
    <dbReference type="NCBI Taxonomy" id="9771"/>
    <lineage>
        <taxon>Eukaryota</taxon>
        <taxon>Metazoa</taxon>
        <taxon>Chordata</taxon>
        <taxon>Craniata</taxon>
        <taxon>Vertebrata</taxon>
        <taxon>Euteleostomi</taxon>
        <taxon>Mammalia</taxon>
        <taxon>Eutheria</taxon>
        <taxon>Laurasiatheria</taxon>
        <taxon>Artiodactyla</taxon>
        <taxon>Whippomorpha</taxon>
        <taxon>Cetacea</taxon>
        <taxon>Mysticeti</taxon>
        <taxon>Balaenopteridae</taxon>
        <taxon>Balaenoptera</taxon>
    </lineage>
</organism>
<name>NU3M_BALMU</name>
<evidence type="ECO:0000250" key="1">
    <source>
        <dbReference type="UniProtKB" id="P03897"/>
    </source>
</evidence>
<evidence type="ECO:0000250" key="2">
    <source>
        <dbReference type="UniProtKB" id="P03898"/>
    </source>
</evidence>
<evidence type="ECO:0000255" key="3"/>
<evidence type="ECO:0000305" key="4"/>
<proteinExistence type="inferred from homology"/>
<keyword id="KW-0249">Electron transport</keyword>
<keyword id="KW-0472">Membrane</keyword>
<keyword id="KW-0496">Mitochondrion</keyword>
<keyword id="KW-0999">Mitochondrion inner membrane</keyword>
<keyword id="KW-0520">NAD</keyword>
<keyword id="KW-1185">Reference proteome</keyword>
<keyword id="KW-0679">Respiratory chain</keyword>
<keyword id="KW-1278">Translocase</keyword>
<keyword id="KW-0812">Transmembrane</keyword>
<keyword id="KW-1133">Transmembrane helix</keyword>
<keyword id="KW-0813">Transport</keyword>
<keyword id="KW-0830">Ubiquinone</keyword>
<accession>P68307</accession>
<accession>P24973</accession>
<protein>
    <recommendedName>
        <fullName evidence="1">NADH-ubiquinone oxidoreductase chain 3</fullName>
        <ecNumber evidence="1">7.1.1.2</ecNumber>
    </recommendedName>
    <alternativeName>
        <fullName>NADH dehydrogenase subunit 3</fullName>
    </alternativeName>
</protein>